<name>MPI_CANAL</name>
<protein>
    <recommendedName>
        <fullName>Mannose-6-phosphate isomerase</fullName>
        <ecNumber evidence="1">5.3.1.8</ecNumber>
    </recommendedName>
    <alternativeName>
        <fullName>Phosphohexomutase</fullName>
    </alternativeName>
    <alternativeName>
        <fullName>Phosphomannose isomerase</fullName>
        <shortName>PMI</shortName>
    </alternativeName>
</protein>
<feature type="initiator methionine" description="Removed" evidence="3">
    <location>
        <position position="1"/>
    </location>
</feature>
<feature type="chain" id="PRO_0000194241" description="Mannose-6-phosphate isomerase">
    <location>
        <begin position="2"/>
        <end position="441"/>
    </location>
</feature>
<feature type="active site" evidence="1">
    <location>
        <position position="304"/>
    </location>
</feature>
<feature type="binding site" evidence="2">
    <location>
        <position position="111"/>
    </location>
    <ligand>
        <name>Zn(2+)</name>
        <dbReference type="ChEBI" id="CHEBI:29105"/>
    </ligand>
</feature>
<feature type="binding site" evidence="2">
    <location>
        <position position="113"/>
    </location>
    <ligand>
        <name>Zn(2+)</name>
        <dbReference type="ChEBI" id="CHEBI:29105"/>
    </ligand>
</feature>
<feature type="binding site" evidence="2">
    <location>
        <position position="138"/>
    </location>
    <ligand>
        <name>Zn(2+)</name>
        <dbReference type="ChEBI" id="CHEBI:29105"/>
    </ligand>
</feature>
<feature type="binding site" evidence="2">
    <location>
        <position position="285"/>
    </location>
    <ligand>
        <name>Zn(2+)</name>
        <dbReference type="ChEBI" id="CHEBI:29105"/>
    </ligand>
</feature>
<feature type="site" description="Its modification inactivates the enzyme">
    <location>
        <position position="150"/>
    </location>
</feature>
<feature type="strand" evidence="4">
    <location>
        <begin position="4"/>
        <end position="11"/>
    </location>
</feature>
<feature type="strand" evidence="4">
    <location>
        <begin position="19"/>
        <end position="21"/>
    </location>
</feature>
<feature type="helix" evidence="4">
    <location>
        <begin position="22"/>
        <end position="24"/>
    </location>
</feature>
<feature type="helix" evidence="4">
    <location>
        <begin position="26"/>
        <end position="34"/>
    </location>
</feature>
<feature type="strand" evidence="4">
    <location>
        <begin position="44"/>
        <end position="46"/>
    </location>
</feature>
<feature type="strand" evidence="4">
    <location>
        <begin position="48"/>
        <end position="52"/>
    </location>
</feature>
<feature type="strand" evidence="4">
    <location>
        <begin position="59"/>
        <end position="61"/>
    </location>
</feature>
<feature type="turn" evidence="4">
    <location>
        <begin position="62"/>
        <end position="66"/>
    </location>
</feature>
<feature type="helix" evidence="4">
    <location>
        <begin position="69"/>
        <end position="75"/>
    </location>
</feature>
<feature type="helix" evidence="4">
    <location>
        <begin position="77"/>
        <end position="80"/>
    </location>
</feature>
<feature type="helix" evidence="4">
    <location>
        <begin position="83"/>
        <end position="89"/>
    </location>
</feature>
<feature type="strand" evidence="4">
    <location>
        <begin position="92"/>
        <end position="94"/>
    </location>
</feature>
<feature type="strand" evidence="4">
    <location>
        <begin position="96"/>
        <end position="106"/>
    </location>
</feature>
<feature type="strand" evidence="4">
    <location>
        <begin position="110"/>
        <end position="112"/>
    </location>
</feature>
<feature type="helix" evidence="4">
    <location>
        <begin position="116"/>
        <end position="125"/>
    </location>
</feature>
<feature type="turn" evidence="4">
    <location>
        <begin position="127"/>
        <end position="129"/>
    </location>
</feature>
<feature type="strand" evidence="4">
    <location>
        <begin position="138"/>
        <end position="144"/>
    </location>
</feature>
<feature type="strand" evidence="4">
    <location>
        <begin position="146"/>
        <end position="152"/>
    </location>
</feature>
<feature type="helix" evidence="4">
    <location>
        <begin position="155"/>
        <end position="164"/>
    </location>
</feature>
<feature type="helix" evidence="4">
    <location>
        <begin position="166"/>
        <end position="172"/>
    </location>
</feature>
<feature type="helix" evidence="4">
    <location>
        <begin position="174"/>
        <end position="183"/>
    </location>
</feature>
<feature type="helix" evidence="4">
    <location>
        <begin position="193"/>
        <end position="210"/>
    </location>
</feature>
<feature type="helix" evidence="4">
    <location>
        <begin position="214"/>
        <end position="230"/>
    </location>
</feature>
<feature type="helix" evidence="4">
    <location>
        <begin position="232"/>
        <end position="236"/>
    </location>
</feature>
<feature type="helix" evidence="4">
    <location>
        <begin position="242"/>
        <end position="252"/>
    </location>
</feature>
<feature type="helix" evidence="4">
    <location>
        <begin position="258"/>
        <end position="261"/>
    </location>
</feature>
<feature type="turn" evidence="4">
    <location>
        <begin position="262"/>
        <end position="265"/>
    </location>
</feature>
<feature type="strand" evidence="4">
    <location>
        <begin position="266"/>
        <end position="271"/>
    </location>
</feature>
<feature type="strand" evidence="4">
    <location>
        <begin position="276"/>
        <end position="279"/>
    </location>
</feature>
<feature type="strand" evidence="4">
    <location>
        <begin position="285"/>
        <end position="298"/>
    </location>
</feature>
<feature type="strand" evidence="4">
    <location>
        <begin position="303"/>
        <end position="307"/>
    </location>
</feature>
<feature type="helix" evidence="4">
    <location>
        <begin position="314"/>
        <end position="320"/>
    </location>
</feature>
<feature type="helix" evidence="4">
    <location>
        <begin position="328"/>
        <end position="331"/>
    </location>
</feature>
<feature type="strand" evidence="4">
    <location>
        <begin position="341"/>
        <end position="344"/>
    </location>
</feature>
<feature type="strand" evidence="4">
    <location>
        <begin position="346"/>
        <end position="351"/>
    </location>
</feature>
<feature type="strand" evidence="4">
    <location>
        <begin position="354"/>
        <end position="357"/>
    </location>
</feature>
<feature type="strand" evidence="4">
    <location>
        <begin position="359"/>
        <end position="364"/>
    </location>
</feature>
<feature type="turn" evidence="4">
    <location>
        <begin position="367"/>
        <end position="369"/>
    </location>
</feature>
<feature type="strand" evidence="4">
    <location>
        <begin position="372"/>
        <end position="375"/>
    </location>
</feature>
<feature type="strand" evidence="4">
    <location>
        <begin position="382"/>
        <end position="395"/>
    </location>
</feature>
<feature type="strand" evidence="4">
    <location>
        <begin position="398"/>
        <end position="406"/>
    </location>
</feature>
<feature type="strand" evidence="4">
    <location>
        <begin position="410"/>
        <end position="413"/>
    </location>
</feature>
<feature type="strand" evidence="4">
    <location>
        <begin position="419"/>
        <end position="423"/>
    </location>
</feature>
<feature type="strand" evidence="4">
    <location>
        <begin position="433"/>
        <end position="438"/>
    </location>
</feature>
<proteinExistence type="evidence at protein level"/>
<keyword id="KW-0002">3D-structure</keyword>
<keyword id="KW-0963">Cytoplasm</keyword>
<keyword id="KW-0903">Direct protein sequencing</keyword>
<keyword id="KW-0413">Isomerase</keyword>
<keyword id="KW-0479">Metal-binding</keyword>
<keyword id="KW-1185">Reference proteome</keyword>
<keyword id="KW-0862">Zinc</keyword>
<gene>
    <name type="primary">PMI1</name>
    <name type="synonym">MANA</name>
    <name type="ordered locus">CAALFM_C209640WA</name>
    <name type="ORF">CaO19.1390</name>
</gene>
<organism>
    <name type="scientific">Candida albicans (strain SC5314 / ATCC MYA-2876)</name>
    <name type="common">Yeast</name>
    <dbReference type="NCBI Taxonomy" id="237561"/>
    <lineage>
        <taxon>Eukaryota</taxon>
        <taxon>Fungi</taxon>
        <taxon>Dikarya</taxon>
        <taxon>Ascomycota</taxon>
        <taxon>Saccharomycotina</taxon>
        <taxon>Pichiomycetes</taxon>
        <taxon>Debaryomycetaceae</taxon>
        <taxon>Candida/Lodderomyces clade</taxon>
        <taxon>Candida</taxon>
    </lineage>
</organism>
<sequence>MSSEKLFRIQCGYQNYDWGKIGSSSAVAQFVHNSDPSITIDETKPYAELWMGTHPSVPSKAIDLNNQTLRDLVTAKPQEYLGESIITKFGSSKELPFLFKVLSIEKVLSIQAHPDKKLGAQLHAADPKNYPDDNHKPEMAIAVTDFEGFCGFKPLDQLAKTLATVPELNEIIGQELVDEFISGIKLPAEVGSQDDVNNRKLLQKVFGKLMNTDDDVIKQQTAKLLERTDREPQVFKDIDSRLPELIQRLNKQFPNDIGLFCGCLLLNHVGLNKGEAMFLQAKDPHAYISGDIIECMAASDNVVRAGFTPKFKDVKNLVEMLTYSYESVEKQKMPLQEFPRSKGDAVKSVLYDPPIAEFSVLQTIFDKSKGGKQVIEGLNGPSIVIATNGKGTIQITGDDSTKQKIDTGYVFFVAPGSSIELTADSANQDQDFTTYRAFVEA</sequence>
<comment type="function">
    <text>Involved in the synthesis of the GDP-mannose and dolichol-phosphate-mannose required for a number of critical mannosyl transfer reactions.</text>
</comment>
<comment type="catalytic activity">
    <reaction evidence="1">
        <text>D-mannose 6-phosphate = D-fructose 6-phosphate</text>
        <dbReference type="Rhea" id="RHEA:12356"/>
        <dbReference type="ChEBI" id="CHEBI:58735"/>
        <dbReference type="ChEBI" id="CHEBI:61527"/>
        <dbReference type="EC" id="5.3.1.8"/>
    </reaction>
</comment>
<comment type="cofactor">
    <cofactor>
        <name>Zn(2+)</name>
        <dbReference type="ChEBI" id="CHEBI:29105"/>
    </cofactor>
    <text evidence="2">Binds 1 zinc ion per subunit.</text>
</comment>
<comment type="pathway">
    <text>Nucleotide-sugar biosynthesis; GDP-alpha-D-mannose biosynthesis; alpha-D-mannose 1-phosphate from D-fructose 6-phosphate: step 1/2.</text>
</comment>
<comment type="subunit">
    <text>Monomer.</text>
</comment>
<comment type="subcellular location">
    <subcellularLocation>
        <location evidence="3">Cytoplasm</location>
    </subcellularLocation>
</comment>
<comment type="similarity">
    <text evidence="3">Belongs to the mannose-6-phosphate isomerase type 1 family.</text>
</comment>
<evidence type="ECO:0000269" key="1">
    <source>
    </source>
</evidence>
<evidence type="ECO:0000269" key="2">
    <source>
    </source>
</evidence>
<evidence type="ECO:0000305" key="3"/>
<evidence type="ECO:0007829" key="4">
    <source>
        <dbReference type="PDB" id="1PMI"/>
    </source>
</evidence>
<dbReference type="EC" id="5.3.1.8" evidence="1"/>
<dbReference type="EMBL" id="X82024">
    <property type="protein sequence ID" value="CAA57548.1"/>
    <property type="molecule type" value="Genomic_DNA"/>
</dbReference>
<dbReference type="EMBL" id="CP017624">
    <property type="protein sequence ID" value="AOW27942.1"/>
    <property type="molecule type" value="Genomic_DNA"/>
</dbReference>
<dbReference type="PIR" id="S55354">
    <property type="entry name" value="S55354"/>
</dbReference>
<dbReference type="RefSeq" id="XP_714562.1">
    <property type="nucleotide sequence ID" value="XM_709469.1"/>
</dbReference>
<dbReference type="PDB" id="1PMI">
    <property type="method" value="X-ray"/>
    <property type="resolution" value="1.70 A"/>
    <property type="chains" value="A=2-441"/>
</dbReference>
<dbReference type="PDB" id="5NW7">
    <property type="method" value="X-ray"/>
    <property type="resolution" value="1.85 A"/>
    <property type="chains" value="A=1-441"/>
</dbReference>
<dbReference type="PDBsum" id="1PMI"/>
<dbReference type="PDBsum" id="5NW7"/>
<dbReference type="SMR" id="P34948"/>
<dbReference type="FunCoup" id="P34948">
    <property type="interactions" value="886"/>
</dbReference>
<dbReference type="STRING" id="237561.P34948"/>
<dbReference type="BindingDB" id="P34948"/>
<dbReference type="ChEMBL" id="CHEMBL3946"/>
<dbReference type="EnsemblFungi" id="C2_09640W_A-T">
    <property type="protein sequence ID" value="C2_09640W_A-T-p1"/>
    <property type="gene ID" value="C2_09640W_A"/>
</dbReference>
<dbReference type="GeneID" id="3643795"/>
<dbReference type="KEGG" id="cal:CAALFM_C209640WA"/>
<dbReference type="CGD" id="CAL0000189115">
    <property type="gene designation" value="PMI1"/>
</dbReference>
<dbReference type="VEuPathDB" id="FungiDB:C2_09640W_A"/>
<dbReference type="eggNOG" id="KOG2757">
    <property type="taxonomic scope" value="Eukaryota"/>
</dbReference>
<dbReference type="HOGENOM" id="CLU_026967_0_0_1"/>
<dbReference type="InParanoid" id="P34948"/>
<dbReference type="OrthoDB" id="6605218at2759"/>
<dbReference type="BRENDA" id="5.3.1.8">
    <property type="organism ID" value="1096"/>
</dbReference>
<dbReference type="UniPathway" id="UPA00126">
    <property type="reaction ID" value="UER00423"/>
</dbReference>
<dbReference type="EvolutionaryTrace" id="P34948"/>
<dbReference type="Proteomes" id="UP000000559">
    <property type="component" value="Chromosome 2"/>
</dbReference>
<dbReference type="GO" id="GO:0005829">
    <property type="term" value="C:cytosol"/>
    <property type="evidence" value="ECO:0000318"/>
    <property type="project" value="GO_Central"/>
</dbReference>
<dbReference type="GO" id="GO:0004476">
    <property type="term" value="F:mannose-6-phosphate isomerase activity"/>
    <property type="evidence" value="ECO:0000314"/>
    <property type="project" value="CGD"/>
</dbReference>
<dbReference type="GO" id="GO:0008270">
    <property type="term" value="F:zinc ion binding"/>
    <property type="evidence" value="ECO:0007669"/>
    <property type="project" value="InterPro"/>
</dbReference>
<dbReference type="GO" id="GO:0005975">
    <property type="term" value="P:carbohydrate metabolic process"/>
    <property type="evidence" value="ECO:0007669"/>
    <property type="project" value="InterPro"/>
</dbReference>
<dbReference type="GO" id="GO:0000032">
    <property type="term" value="P:cell wall mannoprotein biosynthetic process"/>
    <property type="evidence" value="ECO:0007669"/>
    <property type="project" value="EnsemblFungi"/>
</dbReference>
<dbReference type="GO" id="GO:0031505">
    <property type="term" value="P:fungal-type cell wall organization"/>
    <property type="evidence" value="ECO:0000315"/>
    <property type="project" value="CGD"/>
</dbReference>
<dbReference type="GO" id="GO:0009298">
    <property type="term" value="P:GDP-mannose biosynthetic process"/>
    <property type="evidence" value="ECO:0000318"/>
    <property type="project" value="GO_Central"/>
</dbReference>
<dbReference type="GO" id="GO:0006486">
    <property type="term" value="P:protein glycosylation"/>
    <property type="evidence" value="ECO:0007669"/>
    <property type="project" value="EnsemblFungi"/>
</dbReference>
<dbReference type="CDD" id="cd07011">
    <property type="entry name" value="cupin_PMI_type_I_N"/>
    <property type="match status" value="1"/>
</dbReference>
<dbReference type="FunFam" id="1.10.441.10:FF:000001">
    <property type="entry name" value="Mannose-6-phosphate isomerase"/>
    <property type="match status" value="1"/>
</dbReference>
<dbReference type="Gene3D" id="2.60.120.10">
    <property type="entry name" value="Jelly Rolls"/>
    <property type="match status" value="2"/>
</dbReference>
<dbReference type="Gene3D" id="1.10.441.10">
    <property type="entry name" value="Phosphomannose Isomerase, domain 2"/>
    <property type="match status" value="1"/>
</dbReference>
<dbReference type="InterPro" id="IPR001250">
    <property type="entry name" value="Man6P_Isoase-1"/>
</dbReference>
<dbReference type="InterPro" id="IPR016305">
    <property type="entry name" value="Mannose-6-P_Isomerase"/>
</dbReference>
<dbReference type="InterPro" id="IPR018050">
    <property type="entry name" value="Pmannose_isomerase-type1_CS"/>
</dbReference>
<dbReference type="InterPro" id="IPR046456">
    <property type="entry name" value="PMI_typeI_C"/>
</dbReference>
<dbReference type="InterPro" id="IPR046457">
    <property type="entry name" value="PMI_typeI_cat"/>
</dbReference>
<dbReference type="InterPro" id="IPR046458">
    <property type="entry name" value="PMI_typeI_hel"/>
</dbReference>
<dbReference type="InterPro" id="IPR014710">
    <property type="entry name" value="RmlC-like_jellyroll"/>
</dbReference>
<dbReference type="InterPro" id="IPR011051">
    <property type="entry name" value="RmlC_Cupin_sf"/>
</dbReference>
<dbReference type="NCBIfam" id="TIGR00218">
    <property type="entry name" value="manA"/>
    <property type="match status" value="1"/>
</dbReference>
<dbReference type="PANTHER" id="PTHR10309">
    <property type="entry name" value="MANNOSE-6-PHOSPHATE ISOMERASE"/>
    <property type="match status" value="1"/>
</dbReference>
<dbReference type="PANTHER" id="PTHR10309:SF0">
    <property type="entry name" value="MANNOSE-6-PHOSPHATE ISOMERASE"/>
    <property type="match status" value="1"/>
</dbReference>
<dbReference type="Pfam" id="PF01238">
    <property type="entry name" value="PMI_typeI_C"/>
    <property type="match status" value="1"/>
</dbReference>
<dbReference type="Pfam" id="PF20511">
    <property type="entry name" value="PMI_typeI_cat"/>
    <property type="match status" value="1"/>
</dbReference>
<dbReference type="Pfam" id="PF20512">
    <property type="entry name" value="PMI_typeI_hel"/>
    <property type="match status" value="1"/>
</dbReference>
<dbReference type="PIRSF" id="PIRSF001480">
    <property type="entry name" value="Mannose-6-phosphate_isomerase"/>
    <property type="match status" value="1"/>
</dbReference>
<dbReference type="PRINTS" id="PR00714">
    <property type="entry name" value="MAN6PISMRASE"/>
</dbReference>
<dbReference type="SUPFAM" id="SSF51182">
    <property type="entry name" value="RmlC-like cupins"/>
    <property type="match status" value="1"/>
</dbReference>
<dbReference type="PROSITE" id="PS00965">
    <property type="entry name" value="PMI_I_1"/>
    <property type="match status" value="1"/>
</dbReference>
<dbReference type="PROSITE" id="PS00966">
    <property type="entry name" value="PMI_I_2"/>
    <property type="match status" value="1"/>
</dbReference>
<reference key="1">
    <citation type="journal article" date="1995" name="Yeast">
        <title>Cloning and heterologous expression of the Candida albicans gene PMI 1 encoding phosphomannose isomerase.</title>
        <authorList>
            <person name="Smith D.J."/>
            <person name="Proudfoot A.E.I."/>
            <person name="de Tiani M."/>
            <person name="Wells T.N.C."/>
            <person name="Payton M.A."/>
        </authorList>
    </citation>
    <scope>NUCLEOTIDE SEQUENCE [GENOMIC DNA]</scope>
    <source>
        <strain>1006</strain>
    </source>
</reference>
<reference key="2">
    <citation type="journal article" date="2004" name="Proc. Natl. Acad. Sci. U.S.A.">
        <title>The diploid genome sequence of Candida albicans.</title>
        <authorList>
            <person name="Jones T."/>
            <person name="Federspiel N.A."/>
            <person name="Chibana H."/>
            <person name="Dungan J."/>
            <person name="Kalman S."/>
            <person name="Magee B.B."/>
            <person name="Newport G."/>
            <person name="Thorstenson Y.R."/>
            <person name="Agabian N."/>
            <person name="Magee P.T."/>
            <person name="Davis R.W."/>
            <person name="Scherer S."/>
        </authorList>
    </citation>
    <scope>NUCLEOTIDE SEQUENCE [LARGE SCALE GENOMIC DNA]</scope>
    <source>
        <strain>SC5314 / ATCC MYA-2876</strain>
    </source>
</reference>
<reference key="3">
    <citation type="journal article" date="2007" name="Genome Biol.">
        <title>Assembly of the Candida albicans genome into sixteen supercontigs aligned on the eight chromosomes.</title>
        <authorList>
            <person name="van het Hoog M."/>
            <person name="Rast T.J."/>
            <person name="Martchenko M."/>
            <person name="Grindle S."/>
            <person name="Dignard D."/>
            <person name="Hogues H."/>
            <person name="Cuomo C."/>
            <person name="Berriman M."/>
            <person name="Scherer S."/>
            <person name="Magee B.B."/>
            <person name="Whiteway M."/>
            <person name="Chibana H."/>
            <person name="Nantel A."/>
            <person name="Magee P.T."/>
        </authorList>
    </citation>
    <scope>GENOME REANNOTATION</scope>
    <source>
        <strain>SC5314 / ATCC MYA-2876</strain>
    </source>
</reference>
<reference key="4">
    <citation type="journal article" date="2013" name="Genome Biol.">
        <title>Assembly of a phased diploid Candida albicans genome facilitates allele-specific measurements and provides a simple model for repeat and indel structure.</title>
        <authorList>
            <person name="Muzzey D."/>
            <person name="Schwartz K."/>
            <person name="Weissman J.S."/>
            <person name="Sherlock G."/>
        </authorList>
    </citation>
    <scope>NUCLEOTIDE SEQUENCE [LARGE SCALE GENOMIC DNA]</scope>
    <scope>GENOME REANNOTATION</scope>
    <source>
        <strain>SC5314 / ATCC MYA-2876</strain>
    </source>
</reference>
<reference key="5">
    <citation type="journal article" date="1993" name="Biochemistry">
        <title>Identification of Cys-150 in the active site of phosphomannose isomerase from Candida albicans.</title>
        <authorList>
            <person name="Coulin F."/>
            <person name="Magnenat E."/>
            <person name="Proudfoot A.E.I."/>
            <person name="Payton M.A."/>
            <person name="Scully P."/>
            <person name="Wells T.N.C."/>
        </authorList>
    </citation>
    <scope>CHEMICAL LABELLING OF CYS-150</scope>
    <scope>PARTIAL PROTEIN SEQUENCE</scope>
</reference>
<reference key="6">
    <citation type="journal article" date="1994" name="Biochemistry">
        <title>Arginine 304 is an active site residue in phosphomannose isomerase from Candida albicans.</title>
        <authorList>
            <person name="Wells T.N.C."/>
            <person name="Scully P."/>
            <person name="Magnenat E."/>
        </authorList>
    </citation>
    <scope>ACTIVE SITE ARG-304</scope>
    <scope>PROTEIN SEQUENCE OF 300-312</scope>
    <scope>CATALYTIC ACTIVITY</scope>
</reference>
<reference key="7">
    <citation type="journal article" date="1996" name="Nat. Struct. Biol.">
        <title>The X-ray crystal structure of phosphomannose isomerase from Candida albicans at 1.7-A resolution.</title>
        <authorList>
            <person name="Cleasby A."/>
            <person name="Wonacott A."/>
            <person name="Skarzynski T."/>
            <person name="Hubbard R.E."/>
            <person name="Davies G.J."/>
            <person name="Proudfoot A.E.I."/>
            <person name="Bernard A.R."/>
            <person name="Payton M.A."/>
            <person name="Wells T.N.C."/>
        </authorList>
    </citation>
    <scope>X-RAY CRYSTALLOGRAPHY (1.7 ANGSTROMS)</scope>
</reference>
<accession>P34948</accession>
<accession>A0A1D8PII7</accession>
<accession>Q59YD6</accession>